<feature type="chain" id="PRO_0000408302" description="7-methylxanthosine synthase 1">
    <location>
        <begin position="1"/>
        <end position="372"/>
    </location>
</feature>
<feature type="binding site" evidence="2">
    <location>
        <position position="18"/>
    </location>
    <ligand>
        <name>S-adenosyl-L-homocysteine</name>
        <dbReference type="ChEBI" id="CHEBI:57856"/>
    </ligand>
</feature>
<feature type="binding site" evidence="1">
    <location>
        <position position="21"/>
    </location>
    <ligand>
        <name>xanthosine</name>
        <dbReference type="ChEBI" id="CHEBI:18107"/>
    </ligand>
</feature>
<feature type="binding site" evidence="1">
    <location>
        <position position="25"/>
    </location>
    <ligand>
        <name>xanthosine</name>
        <dbReference type="ChEBI" id="CHEBI:18107"/>
    </ligand>
</feature>
<feature type="binding site" evidence="2">
    <location>
        <position position="62"/>
    </location>
    <ligand>
        <name>S-adenosyl-L-homocysteine</name>
        <dbReference type="ChEBI" id="CHEBI:57856"/>
    </ligand>
</feature>
<feature type="binding site" evidence="2">
    <location>
        <position position="67"/>
    </location>
    <ligand>
        <name>S-adenosyl-L-homocysteine</name>
        <dbReference type="ChEBI" id="CHEBI:57856"/>
    </ligand>
</feature>
<feature type="binding site" evidence="2">
    <location>
        <position position="101"/>
    </location>
    <ligand>
        <name>S-adenosyl-L-homocysteine</name>
        <dbReference type="ChEBI" id="CHEBI:57856"/>
    </ligand>
</feature>
<feature type="binding site" evidence="2">
    <location>
        <position position="102"/>
    </location>
    <ligand>
        <name>S-adenosyl-L-homocysteine</name>
        <dbReference type="ChEBI" id="CHEBI:57856"/>
    </ligand>
</feature>
<feature type="binding site" evidence="2">
    <location>
        <position position="140"/>
    </location>
    <ligand>
        <name>S-adenosyl-L-homocysteine</name>
        <dbReference type="ChEBI" id="CHEBI:57856"/>
    </ligand>
</feature>
<feature type="binding site" evidence="2">
    <location>
        <position position="141"/>
    </location>
    <ligand>
        <name>S-adenosyl-L-homocysteine</name>
        <dbReference type="ChEBI" id="CHEBI:57856"/>
    </ligand>
</feature>
<feature type="binding site" evidence="1">
    <location>
        <position position="157"/>
    </location>
    <ligand>
        <name>S-adenosyl-L-homocysteine</name>
        <dbReference type="ChEBI" id="CHEBI:57856"/>
    </ligand>
</feature>
<feature type="binding site" evidence="1">
    <location>
        <position position="158"/>
    </location>
    <ligand>
        <name>xanthosine</name>
        <dbReference type="ChEBI" id="CHEBI:18107"/>
    </ligand>
</feature>
<feature type="binding site" evidence="2">
    <location>
        <position position="159"/>
    </location>
    <ligand>
        <name>S-adenosyl-L-homocysteine</name>
        <dbReference type="ChEBI" id="CHEBI:57856"/>
    </ligand>
</feature>
<feature type="binding site" evidence="1">
    <location>
        <position position="161"/>
    </location>
    <ligand>
        <name>xanthosine</name>
        <dbReference type="ChEBI" id="CHEBI:18107"/>
    </ligand>
</feature>
<feature type="binding site" evidence="1">
    <location>
        <position position="162"/>
    </location>
    <ligand>
        <name>xanthosine</name>
        <dbReference type="ChEBI" id="CHEBI:18107"/>
    </ligand>
</feature>
<feature type="binding site" evidence="3">
    <location>
        <position position="179"/>
    </location>
    <ligand>
        <name>Mg(2+)</name>
        <dbReference type="ChEBI" id="CHEBI:18420"/>
    </ligand>
</feature>
<feature type="binding site" evidence="3">
    <location>
        <position position="261"/>
    </location>
    <ligand>
        <name>Mg(2+)</name>
        <dbReference type="ChEBI" id="CHEBI:18420"/>
    </ligand>
</feature>
<feature type="binding site" evidence="3">
    <location>
        <position position="263"/>
    </location>
    <ligand>
        <name>Mg(2+)</name>
        <dbReference type="ChEBI" id="CHEBI:18420"/>
    </ligand>
</feature>
<feature type="binding site" evidence="3">
    <location>
        <position position="264"/>
    </location>
    <ligand>
        <name>Mg(2+)</name>
        <dbReference type="ChEBI" id="CHEBI:18420"/>
    </ligand>
</feature>
<feature type="binding site" evidence="1">
    <location>
        <position position="316"/>
    </location>
    <ligand>
        <name>xanthosine</name>
        <dbReference type="ChEBI" id="CHEBI:18107"/>
    </ligand>
</feature>
<feature type="binding site" evidence="1">
    <location>
        <position position="321"/>
    </location>
    <ligand>
        <name>xanthosine</name>
        <dbReference type="ChEBI" id="CHEBI:18107"/>
    </ligand>
</feature>
<feature type="binding site" evidence="1">
    <location>
        <position position="356"/>
    </location>
    <ligand>
        <name>xanthosine</name>
        <dbReference type="ChEBI" id="CHEBI:18107"/>
    </ligand>
</feature>
<feature type="site" description="Involved in substrate discrimination" evidence="4">
    <location>
        <position position="155"/>
    </location>
</feature>
<feature type="site" description="Involved in substrate discrimination" evidence="4">
    <location>
        <position position="267"/>
    </location>
</feature>
<feature type="site" description="Involved in substrate discrimination" evidence="4">
    <location>
        <position position="331"/>
    </location>
</feature>
<feature type="sequence conflict" description="In Ref. 5; AFV60442/AFV60449." evidence="17" ref="5">
    <original>R</original>
    <variation>Q</variation>
    <location>
        <position position="8"/>
    </location>
</feature>
<dbReference type="EC" id="2.1.1.158" evidence="6 7"/>
<dbReference type="EMBL" id="AB048793">
    <property type="protein sequence ID" value="BAB39215.1"/>
    <property type="molecule type" value="mRNA"/>
</dbReference>
<dbReference type="EMBL" id="AB034699">
    <property type="protein sequence ID" value="BAC43755.1"/>
    <property type="molecule type" value="mRNA"/>
</dbReference>
<dbReference type="EMBL" id="AF494412">
    <property type="protein sequence ID" value="AAM18502.1"/>
    <property type="molecule type" value="mRNA"/>
</dbReference>
<dbReference type="EMBL" id="JX978514">
    <property type="protein sequence ID" value="AFV60442.1"/>
    <property type="molecule type" value="Genomic_DNA"/>
</dbReference>
<dbReference type="EMBL" id="JX978521">
    <property type="protein sequence ID" value="AFV60449.1"/>
    <property type="molecule type" value="mRNA"/>
</dbReference>
<dbReference type="SMR" id="Q9AVK0"/>
<dbReference type="KEGG" id="ag:BAB39215"/>
<dbReference type="OrthoDB" id="1523883at2759"/>
<dbReference type="BRENDA" id="2.1.1.158">
    <property type="organism ID" value="1559"/>
</dbReference>
<dbReference type="SABIO-RK" id="Q9AVK0"/>
<dbReference type="Proteomes" id="UP000515148">
    <property type="component" value="Unplaced"/>
</dbReference>
<dbReference type="GO" id="GO:0046872">
    <property type="term" value="F:metal ion binding"/>
    <property type="evidence" value="ECO:0007669"/>
    <property type="project" value="UniProtKB-KW"/>
</dbReference>
<dbReference type="GO" id="GO:0008168">
    <property type="term" value="F:methyltransferase activity"/>
    <property type="evidence" value="ECO:0007669"/>
    <property type="project" value="UniProtKB-KW"/>
</dbReference>
<dbReference type="GO" id="GO:0009820">
    <property type="term" value="P:alkaloid metabolic process"/>
    <property type="evidence" value="ECO:0007669"/>
    <property type="project" value="UniProtKB-KW"/>
</dbReference>
<dbReference type="GO" id="GO:0032259">
    <property type="term" value="P:methylation"/>
    <property type="evidence" value="ECO:0007669"/>
    <property type="project" value="UniProtKB-KW"/>
</dbReference>
<dbReference type="Gene3D" id="1.10.1200.270">
    <property type="entry name" value="Methyltransferase, alpha-helical capping domain"/>
    <property type="match status" value="1"/>
</dbReference>
<dbReference type="Gene3D" id="3.40.50.150">
    <property type="entry name" value="Vaccinia Virus protein VP39"/>
    <property type="match status" value="1"/>
</dbReference>
<dbReference type="InterPro" id="IPR005299">
    <property type="entry name" value="MeTrfase_7"/>
</dbReference>
<dbReference type="InterPro" id="IPR042086">
    <property type="entry name" value="MeTrfase_capping"/>
</dbReference>
<dbReference type="InterPro" id="IPR029063">
    <property type="entry name" value="SAM-dependent_MTases_sf"/>
</dbReference>
<dbReference type="PANTHER" id="PTHR31009">
    <property type="entry name" value="S-ADENOSYL-L-METHIONINE:CARBOXYL METHYLTRANSFERASE FAMILY PROTEIN"/>
    <property type="match status" value="1"/>
</dbReference>
<dbReference type="Pfam" id="PF03492">
    <property type="entry name" value="Methyltransf_7"/>
    <property type="match status" value="1"/>
</dbReference>
<dbReference type="SUPFAM" id="SSF53335">
    <property type="entry name" value="S-adenosyl-L-methionine-dependent methyltransferases"/>
    <property type="match status" value="1"/>
</dbReference>
<sequence>MELQEVLRMNGGEGDTSYAKNSAYNQLVLAKVKPVLEQCVRELLRANLPNINKCIKVADLGCASGPNTLLTVRDIVQSIDKVGQEKKNELERPTIQIFLNDLFPNDFNSVFKLLPSFYRKLEKENGRKIGSCLIGAMPGSFYSRLFPEESMHFLHSCYCLQWLSQVPSGLVTELGISTNKGSIYSSKASRLPVQKAYLDQFTKDFTTFLRIHSEELFSHGRMLLTCICKGVELDARNAIDLLEMAINDLVVEGHLEEEKLDSFNLPVYIPSAEEVKCIVEEEGSFEILYLETFKVLYDAGFSIDDEHIKAEYVASSVRAVYEPILASHFGEAIIPDIFHRFAKHAAKVLPLGKGFYNNLIISLAKKPEKSDV</sequence>
<protein>
    <recommendedName>
        <fullName evidence="14">7-methylxanthosine synthase 1</fullName>
        <shortName evidence="14">CmXRS1</shortName>
        <ecNumber evidence="6 7">2.1.1.158</ecNumber>
    </recommendedName>
    <alternativeName>
        <fullName evidence="11">Methyltransferase-like 3</fullName>
        <shortName evidence="11">CaMTL3</shortName>
    </alternativeName>
    <alternativeName>
        <fullName evidence="13 16">Xanthosine methyltransferase 1</fullName>
        <shortName evidence="13 16">CaXMT1</shortName>
    </alternativeName>
</protein>
<gene>
    <name evidence="13 16" type="primary">XMT1</name>
    <name evidence="12" type="synonym">CS1</name>
    <name evidence="11" type="synonym">MTL3</name>
    <name evidence="14" type="synonym">XRS1</name>
</gene>
<evidence type="ECO:0000250" key="1">
    <source>
        <dbReference type="UniProtKB" id="A4GE69"/>
    </source>
</evidence>
<evidence type="ECO:0000250" key="2">
    <source>
        <dbReference type="UniProtKB" id="A4GE70"/>
    </source>
</evidence>
<evidence type="ECO:0000250" key="3">
    <source>
        <dbReference type="UniProtKB" id="Q9FLN8"/>
    </source>
</evidence>
<evidence type="ECO:0000250" key="4">
    <source>
        <dbReference type="UniProtKB" id="Q9FZN8"/>
    </source>
</evidence>
<evidence type="ECO:0000269" key="5">
    <source>
    </source>
</evidence>
<evidence type="ECO:0000269" key="6">
    <source>
    </source>
</evidence>
<evidence type="ECO:0000269" key="7">
    <source>
    </source>
</evidence>
<evidence type="ECO:0000269" key="8">
    <source>
    </source>
</evidence>
<evidence type="ECO:0000269" key="9">
    <source>
    </source>
</evidence>
<evidence type="ECO:0000269" key="10">
    <source>
    </source>
</evidence>
<evidence type="ECO:0000303" key="11">
    <source>
    </source>
</evidence>
<evidence type="ECO:0000303" key="12">
    <source>
    </source>
</evidence>
<evidence type="ECO:0000303" key="13">
    <source>
    </source>
</evidence>
<evidence type="ECO:0000303" key="14">
    <source>
    </source>
</evidence>
<evidence type="ECO:0000303" key="15">
    <source>
    </source>
</evidence>
<evidence type="ECO:0000303" key="16">
    <source>
    </source>
</evidence>
<evidence type="ECO:0000305" key="17"/>
<keyword id="KW-0017">Alkaloid metabolism</keyword>
<keyword id="KW-0460">Magnesium</keyword>
<keyword id="KW-0479">Metal-binding</keyword>
<keyword id="KW-0489">Methyltransferase</keyword>
<keyword id="KW-1185">Reference proteome</keyword>
<keyword id="KW-0949">S-adenosyl-L-methionine</keyword>
<keyword id="KW-0808">Transferase</keyword>
<name>XMT1_COFAR</name>
<comment type="function">
    <text evidence="6 7 9 15">Involved in the biosynthesis of caffeine (PubMed:18068204, PubMed:25133732). Specific for xanthosine and could not use xanthosine 5'-monophosphate (XMP) as substrate. Catalyzes the 7-N-methylation activity of xanthosine, but does not have 1-N- or 3-N-methylation activity (PubMed:18068204).</text>
</comment>
<comment type="catalytic activity">
    <reaction evidence="6 7">
        <text>xanthosine + S-adenosyl-L-methionine = 7-methylxanthosine + S-adenosyl-L-homocysteine</text>
        <dbReference type="Rhea" id="RHEA:15025"/>
        <dbReference type="ChEBI" id="CHEBI:18107"/>
        <dbReference type="ChEBI" id="CHEBI:49310"/>
        <dbReference type="ChEBI" id="CHEBI:57856"/>
        <dbReference type="ChEBI" id="CHEBI:59789"/>
        <dbReference type="EC" id="2.1.1.158"/>
    </reaction>
    <physiologicalReaction direction="left-to-right" evidence="6 7">
        <dbReference type="Rhea" id="RHEA:15026"/>
    </physiologicalReaction>
</comment>
<comment type="cofactor">
    <cofactor evidence="3">
        <name>Mg(2+)</name>
        <dbReference type="ChEBI" id="CHEBI:18420"/>
    </cofactor>
    <text evidence="3">Binds 1 Mg(2+) ion per subunit.</text>
</comment>
<comment type="biophysicochemical properties">
    <kinetics>
        <KM evidence="6 7">73.7 uM for xanthosine</KM>
        <KM evidence="6 7">13 uM for S-adenosyl-L-methionine</KM>
        <Vmax evidence="6 7">11.8 pmol/sec/mg enzyme toward xanthosine</Vmax>
    </kinetics>
    <phDependence>
        <text evidence="6 7">Optimum pH is 7.0.</text>
    </phDependence>
</comment>
<comment type="pathway">
    <text evidence="6 7">Alkaloid biosynthesis.</text>
</comment>
<comment type="tissue specificity">
    <text evidence="5 6 7 10">Expressed in stems, young leaves, floral buds, developing endosperm and immature fruits (grains) (PubMed:25249475). Detected in roots and old leaves, but not in mature fruits (PubMed:25249475).</text>
</comment>
<comment type="biotechnology">
    <text evidence="9">Saccharomyces cerevisiae (Yeast) expressing Coffea arabica (coffee) xanthosine methyltransferase (CaXMT1) and Camellia sinensis (tea) caffeine synthase (TCS1) accumulates caffeine.</text>
</comment>
<comment type="biotechnology">
    <text evidence="8">Tobacco plants (Nicotiana tabacum cv. Xanthi) expressing CaXMT1, CaMXMT1 and CaDXMT1 accumulate caffeine and become less appetant and toxic for caterpillars cutworms (Spodoptera litura). Caffeine also stimulates endogenous defense mechanisms against other pathogens (e.g. tobacco mosaic virus and Pseudomonas syringae) by triggering the expression of defense-related genes.</text>
</comment>
<comment type="similarity">
    <text evidence="17">Belongs to the methyltransferase superfamily. Type-7 methyltransferase family.</text>
</comment>
<organism>
    <name type="scientific">Coffea arabica</name>
    <name type="common">Arabian coffee</name>
    <dbReference type="NCBI Taxonomy" id="13443"/>
    <lineage>
        <taxon>Eukaryota</taxon>
        <taxon>Viridiplantae</taxon>
        <taxon>Streptophyta</taxon>
        <taxon>Embryophyta</taxon>
        <taxon>Tracheophyta</taxon>
        <taxon>Spermatophyta</taxon>
        <taxon>Magnoliopsida</taxon>
        <taxon>eudicotyledons</taxon>
        <taxon>Gunneridae</taxon>
        <taxon>Pentapetalae</taxon>
        <taxon>asterids</taxon>
        <taxon>lamiids</taxon>
        <taxon>Gentianales</taxon>
        <taxon>Rubiaceae</taxon>
        <taxon>Ixoroideae</taxon>
        <taxon>Gardenieae complex</taxon>
        <taxon>Bertiereae - Coffeeae clade</taxon>
        <taxon>Coffeeae</taxon>
        <taxon>Coffea</taxon>
    </lineage>
</organism>
<accession>Q9AVK0</accession>
<accession>A0A096VI00</accession>
<reference key="1">
    <citation type="journal article" date="2001" name="J. Biol. Chem.">
        <title>7-Methylxanthine methyltransferase of coffee plants. Gene isolation and enzymatic properties.</title>
        <authorList>
            <person name="Ogawa M."/>
            <person name="Herai Y."/>
            <person name="Koizumi N."/>
            <person name="Kusano T."/>
            <person name="Sano H."/>
        </authorList>
    </citation>
    <scope>NUCLEOTIDE SEQUENCE [MRNA]</scope>
    <scope>TISSUE SPECIFICITY</scope>
    <source>
        <strain>cv. Caturra</strain>
    </source>
</reference>
<reference key="2">
    <citation type="journal article" date="2003" name="FEBS Lett.">
        <title>Isolation of a new dual-functional caffeine synthase gene encoding an enzyme for the conversion of 7-methylxanthine to caffeine from coffee (Coffea arabica L.).</title>
        <authorList>
            <person name="Mizuno K."/>
            <person name="Okuda A."/>
            <person name="Kato M."/>
            <person name="Yoneyama N."/>
            <person name="Tanaka H."/>
            <person name="Ashihara H."/>
            <person name="Fujimura T."/>
        </authorList>
    </citation>
    <scope>NUCLEOTIDE SEQUENCE [MRNA]</scope>
</reference>
<reference key="3">
    <citation type="submission" date="2002-03" db="EMBL/GenBank/DDBJ databases">
        <title>N-methyltransferases in the genus Coffea.</title>
        <authorList>
            <person name="Kretschmar J.A."/>
            <person name="Baumann T.W."/>
        </authorList>
    </citation>
    <scope>NUCLEOTIDE SEQUENCE [MRNA]</scope>
    <source>
        <strain>cv. Catuai</strain>
        <tissue>Leaf</tissue>
    </source>
</reference>
<reference key="4">
    <citation type="journal article" date="2003" name="Plant Physiol.">
        <title>Molecular cloning and functional characterization of three distinct N-methyltransferases involved in the caffeine biosynthetic pathway in coffee plants.</title>
        <authorList>
            <person name="Uefuji H."/>
            <person name="Ogita S."/>
            <person name="Yamaguchi Y."/>
            <person name="Koizumi N."/>
            <person name="Sano H."/>
        </authorList>
    </citation>
    <scope>NUCLEOTIDE SEQUENCE [MRNA]</scope>
    <scope>FUNCTION</scope>
    <scope>CATALYTIC ACTIVITY</scope>
    <scope>BIOPHYSICOCHEMICAL PROPERTIES</scope>
    <scope>TISSUE SPECIFICITY</scope>
    <scope>PATHWAY</scope>
</reference>
<reference key="5">
    <citation type="journal article" date="2015" name="Planta">
        <title>Differential regulation of caffeine metabolism in Coffea arabica (Arabica) and Coffea canephora (Robusta).</title>
        <authorList>
            <person name="Perrois C."/>
            <person name="Strickler S.R."/>
            <person name="Mathieu G."/>
            <person name="Lepelley M."/>
            <person name="Bedon L."/>
            <person name="Michaux S."/>
            <person name="Husson J."/>
            <person name="Mueller L."/>
            <person name="Privat I."/>
        </authorList>
    </citation>
    <scope>NUCLEOTIDE SEQUENCE [GENOMIC DNA / MRNA]</scope>
    <scope>TISSUE SPECIFICITY</scope>
    <scope>GENE FAMILY</scope>
    <scope>NOMENCLATURE</scope>
    <source>
        <strain>cv. Caturra</strain>
        <strain>cv. ET39</strain>
    </source>
</reference>
<reference key="6">
    <citation type="journal article" date="2003" name="FEBS Lett.">
        <title>The first committed step reaction of caffeine biosynthesis: 7-methylxanthosine synthase is closely homologous to caffeine synthases in coffee (Coffea arabica L.).</title>
        <authorList>
            <person name="Mizuno K."/>
            <person name="Kato M."/>
            <person name="Irino F."/>
            <person name="Yoneyama N."/>
            <person name="Fujimura T."/>
            <person name="Ashihara H."/>
        </authorList>
    </citation>
    <scope>FUNCTION</scope>
    <scope>CATALYTIC ACTIVITY</scope>
    <scope>BIOPHYSICOCHEMICAL PROPERTIES</scope>
    <scope>TISSUE SPECIFICITY</scope>
    <scope>PATHWAY</scope>
</reference>
<reference key="7">
    <citation type="journal article" date="2008" name="Phytochemistry">
        <title>Caffeine and related purine alkaloids: biosynthesis, catabolism, function and genetic engineering.</title>
        <authorList>
            <person name="Ashihara H."/>
            <person name="Sano H."/>
            <person name="Crozier A."/>
        </authorList>
    </citation>
    <scope>FUNCTION</scope>
    <scope>REVIEW ON CAFFEINE BIOSYNTHESIS</scope>
    <scope>BIOTECHNOLOGY</scope>
</reference>
<reference key="8">
    <citation type="journal article" date="2014" name="PLoS ONE">
        <title>Metabolic engineering of Saccharomyces cerevisiae for caffeine and theobromine production.</title>
        <authorList>
            <person name="Jin L."/>
            <person name="Bhuiya M.W."/>
            <person name="Li M."/>
            <person name="Liu X."/>
            <person name="Han J."/>
            <person name="Deng W."/>
            <person name="Wang M."/>
            <person name="Yu O."/>
            <person name="Zhang Z."/>
        </authorList>
    </citation>
    <scope>FUNCTION</scope>
    <scope>BIOTECHNOLOGY</scope>
</reference>
<proteinExistence type="evidence at protein level"/>